<keyword id="KW-0325">Glycoprotein</keyword>
<keyword id="KW-1031">Host cell junction</keyword>
<keyword id="KW-1032">Host cell membrane</keyword>
<keyword id="KW-1040">Host Golgi apparatus</keyword>
<keyword id="KW-1043">Host membrane</keyword>
<keyword id="KW-0472">Membrane</keyword>
<keyword id="KW-0597">Phosphoprotein</keyword>
<keyword id="KW-1185">Reference proteome</keyword>
<keyword id="KW-0732">Signal</keyword>
<keyword id="KW-0812">Transmembrane</keyword>
<keyword id="KW-1133">Transmembrane helix</keyword>
<keyword id="KW-0261">Viral envelope protein</keyword>
<keyword id="KW-0946">Virion</keyword>
<feature type="signal peptide" evidence="2">
    <location>
        <begin position="1"/>
        <end position="22"/>
    </location>
</feature>
<feature type="chain" id="PRO_0000038259" description="Envelope glycoprotein I">
    <location>
        <begin position="23"/>
        <end position="424"/>
    </location>
</feature>
<feature type="topological domain" description="Virion surface" evidence="2">
    <location>
        <begin position="23"/>
        <end position="319"/>
    </location>
</feature>
<feature type="transmembrane region" description="Helical" evidence="2">
    <location>
        <begin position="320"/>
        <end position="340"/>
    </location>
</feature>
<feature type="topological domain" description="Intravirion" evidence="2">
    <location>
        <begin position="341"/>
        <end position="424"/>
    </location>
</feature>
<feature type="region of interest" description="Disordered" evidence="3">
    <location>
        <begin position="192"/>
        <end position="223"/>
    </location>
</feature>
<feature type="region of interest" description="Disordered" evidence="3">
    <location>
        <begin position="287"/>
        <end position="306"/>
    </location>
</feature>
<feature type="region of interest" description="Disordered" evidence="3">
    <location>
        <begin position="377"/>
        <end position="408"/>
    </location>
</feature>
<feature type="compositionally biased region" description="Low complexity" evidence="3">
    <location>
        <begin position="203"/>
        <end position="223"/>
    </location>
</feature>
<feature type="compositionally biased region" description="Polar residues" evidence="3">
    <location>
        <begin position="379"/>
        <end position="388"/>
    </location>
</feature>
<feature type="glycosylation site" description="N-linked (GlcNAc...) asparagine; by host" evidence="2">
    <location>
        <position position="35"/>
    </location>
</feature>
<feature type="glycosylation site" description="N-linked (GlcNAc...) asparagine; by host" evidence="2">
    <location>
        <position position="67"/>
    </location>
</feature>
<feature type="glycosylation site" description="N-linked (GlcNAc...) asparagine; by host" evidence="2">
    <location>
        <position position="78"/>
    </location>
</feature>
<feature type="glycosylation site" description="N-linked (GlcNAc...) asparagine; by host" evidence="2">
    <location>
        <position position="121"/>
    </location>
</feature>
<feature type="glycosylation site" description="N-linked (GlcNAc...) asparagine; by host" evidence="2">
    <location>
        <position position="131"/>
    </location>
</feature>
<feature type="glycosylation site" description="N-linked (GlcNAc...) asparagine; by host" evidence="2">
    <location>
        <position position="236"/>
    </location>
</feature>
<feature type="glycosylation site" description="N-linked (GlcNAc...) asparagine; by host" evidence="2">
    <location>
        <position position="307"/>
    </location>
</feature>
<sequence length="424" mass="46393">MAKLTGMFSAAILLSMAICSTAIIYRGEHMSMYLNASSEFAVYPTDQSLVLVGHLLFLDGQRLPTTNYSGLIELIHYNYSSVCYTVIQTISYESCPRVANNAFRSCLHKTSKHYHDYFRVNASVETNVLLNITKPQPTDSGAYILRVKLDHAPTADVFGVSAFVYDLKSKTVPDPMPTTQTVEPTTSYVSTPTYDYTDDVTTETESTSTSTQQAMTSTQTPSATWGTQLTTELPTNETVVIGQEALLCHWFQPSTRVPTLYLHLLGRTGNLPEDVLLVEDSEFLRTTSPAHRPSASPADGDDFKQTNSTSLKARNKIVAMVVIPTACVLMLLLVVVGAIINGAVRKHLLSCASRRIYRSGQGGASAAERRRLTCGPTLAASSESLADDTTSSPPTPKPSKKTKLETDPLMEQLNRKLEAIKEES</sequence>
<evidence type="ECO:0000250" key="1"/>
<evidence type="ECO:0000255" key="2"/>
<evidence type="ECO:0000256" key="3">
    <source>
        <dbReference type="SAM" id="MobiDB-lite"/>
    </source>
</evidence>
<evidence type="ECO:0000305" key="4"/>
<organism>
    <name type="scientific">Equine herpesvirus 1 (strain Ab4p)</name>
    <name type="common">EHV-1</name>
    <name type="synonym">Equine abortion virus</name>
    <dbReference type="NCBI Taxonomy" id="31520"/>
    <lineage>
        <taxon>Viruses</taxon>
        <taxon>Duplodnaviria</taxon>
        <taxon>Heunggongvirae</taxon>
        <taxon>Peploviricota</taxon>
        <taxon>Herviviricetes</taxon>
        <taxon>Herpesvirales</taxon>
        <taxon>Orthoherpesviridae</taxon>
        <taxon>Alphaherpesvirinae</taxon>
        <taxon>Varicellovirus</taxon>
        <taxon>Varicellovirus equidalpha1</taxon>
        <taxon>Equid alphaherpesvirus 1</taxon>
    </lineage>
</organism>
<proteinExistence type="inferred from homology"/>
<reference key="1">
    <citation type="journal article" date="1992" name="Virology">
        <title>The DNA sequence of equine herpesvirus-1.</title>
        <authorList>
            <person name="Telford E.A.R."/>
            <person name="Watson M.S."/>
            <person name="McBride K."/>
            <person name="Davison A.J."/>
        </authorList>
    </citation>
    <scope>NUCLEOTIDE SEQUENCE [LARGE SCALE GENOMIC DNA]</scope>
</reference>
<dbReference type="EMBL" id="AY665713">
    <property type="protein sequence ID" value="AAT67330.1"/>
    <property type="molecule type" value="Genomic_DNA"/>
</dbReference>
<dbReference type="PIR" id="C36646">
    <property type="entry name" value="VGBEE9"/>
</dbReference>
<dbReference type="GlyCosmos" id="Q6DLD8">
    <property type="glycosylation" value="7 sites, No reported glycans"/>
</dbReference>
<dbReference type="KEGG" id="vg:2948579"/>
<dbReference type="Proteomes" id="UP000001189">
    <property type="component" value="Segment"/>
</dbReference>
<dbReference type="GO" id="GO:0043657">
    <property type="term" value="C:host cell"/>
    <property type="evidence" value="ECO:0007669"/>
    <property type="project" value="InterPro"/>
</dbReference>
<dbReference type="GO" id="GO:0044178">
    <property type="term" value="C:host cell Golgi membrane"/>
    <property type="evidence" value="ECO:0007669"/>
    <property type="project" value="UniProtKB-SubCell"/>
</dbReference>
<dbReference type="GO" id="GO:0044156">
    <property type="term" value="C:host cell junction"/>
    <property type="evidence" value="ECO:0007669"/>
    <property type="project" value="UniProtKB-SubCell"/>
</dbReference>
<dbReference type="GO" id="GO:0016020">
    <property type="term" value="C:membrane"/>
    <property type="evidence" value="ECO:0007669"/>
    <property type="project" value="UniProtKB-KW"/>
</dbReference>
<dbReference type="GO" id="GO:0019031">
    <property type="term" value="C:viral envelope"/>
    <property type="evidence" value="ECO:0007669"/>
    <property type="project" value="UniProtKB-KW"/>
</dbReference>
<dbReference type="GO" id="GO:0055036">
    <property type="term" value="C:virion membrane"/>
    <property type="evidence" value="ECO:0007669"/>
    <property type="project" value="UniProtKB-SubCell"/>
</dbReference>
<dbReference type="Gene3D" id="2.70.230.10">
    <property type="match status" value="1"/>
</dbReference>
<dbReference type="InterPro" id="IPR002874">
    <property type="entry name" value="Herpes_gI"/>
</dbReference>
<dbReference type="Pfam" id="PF01688">
    <property type="entry name" value="Herpes_gI"/>
    <property type="match status" value="1"/>
</dbReference>
<protein>
    <recommendedName>
        <fullName>Envelope glycoprotein I</fullName>
    </recommendedName>
</protein>
<organismHost>
    <name type="scientific">Equus caballus</name>
    <name type="common">Horse</name>
    <dbReference type="NCBI Taxonomy" id="9796"/>
</organismHost>
<accession>Q6DLD8</accession>
<accession>P18553</accession>
<name>GI_EHV1B</name>
<gene>
    <name type="primary">gI</name>
    <name type="ordered locus">73</name>
</gene>
<comment type="function">
    <text>In epithelial cells, the heterodimer gE/gI is required for the cell-to-cell spread of the virus, by sorting nascent virions to cell junctions. Once the virus reaches the cell junctions, virus particles can spread to adjacent cells extremely rapidly through interactions with cellular receptors that accumulate at these junctions. Implicated in basolateral spread in polarized cells. In neuronal cells, gE/gI is essential for the anterograde spread of the infection throughout the host nervous system. Together with US9, the heterodimer gE/gI is involved in the sorting and transport of viral structural components toward axon tips.</text>
</comment>
<comment type="subunit">
    <text evidence="1">Interacts with gE.</text>
</comment>
<comment type="subcellular location">
    <subcellularLocation>
        <location evidence="1">Virion membrane</location>
        <topology evidence="1">Single-pass membrane protein</topology>
    </subcellularLocation>
    <subcellularLocation>
        <location evidence="4">Host cell membrane</location>
        <topology evidence="4">Single-pass type I membrane protein</topology>
    </subcellularLocation>
    <subcellularLocation>
        <location evidence="1">Host cell junction</location>
    </subcellularLocation>
    <subcellularLocation>
        <location evidence="1">Host Golgi apparatus membrane</location>
        <topology evidence="1">Single-pass type I membrane protein</topology>
    </subcellularLocation>
    <text evidence="1">During virion morphogenesis, this protein probably accumulates in the endosomes and trans-Golgi where secondary envelopment occurs. It is probably transported to the cell surface from where it is endocytosed and directed to the trans-Golgi network (TGN). The heterodimer gE/gI then redistribute to cell junctions to promote cell-cell spread later in the infection (By similarity).</text>
</comment>
<comment type="similarity">
    <text evidence="4">Belongs to the alphaherpesvirinae glycoprotein I family.</text>
</comment>